<comment type="subcellular location">
    <subcellularLocation>
        <location evidence="1">Nucleus</location>
    </subcellularLocation>
</comment>
<sequence length="380" mass="44275">MIQQAQFNVQMAEEDRWLTQYPNMEMIVNNKGPKPIFPELNFNITGLEEKSRYVVLLSIQKFDNIRYGFKNGKWGPSKVRHATKKEQEIKYFLHPDGTKLGEELMKETIKFDTVRITNHKKFMDKDNVFFVETMHKYVPVLTVKNITNVESANHSMRMEVAQFFPVTVYNQESIGNWKSKFHKNATFENRLDGGNKRKNTNSREEPSSKRSKNETEIAVLDILQVASQSENYNESTNSGRLQNEISSSIHQFPSTSYQNQYPHAYPTVNTPPIYAQQFPAPFDEKQNQFYPKTDENLAPNCAQDASSLPNFAMNQKASFANQYPYHPYYHQYSQLDHGSPYQYMNNSINSDSSFQSSFSTENSYFDDNGNPIHYPYYPYK</sequence>
<evidence type="ECO:0000255" key="1">
    <source>
        <dbReference type="PROSITE-ProRule" id="PRU00201"/>
    </source>
</evidence>
<evidence type="ECO:0000256" key="2">
    <source>
        <dbReference type="SAM" id="MobiDB-lite"/>
    </source>
</evidence>
<gene>
    <name type="primary">tbx-40</name>
    <name type="ORF">Y73F8A.17</name>
</gene>
<dbReference type="EMBL" id="AL132862">
    <property type="protein sequence ID" value="CAB60542.1"/>
    <property type="molecule type" value="Genomic_DNA"/>
</dbReference>
<dbReference type="RefSeq" id="NP_502852.1">
    <property type="nucleotide sequence ID" value="NM_070451.3"/>
</dbReference>
<dbReference type="SMR" id="Q9NA55"/>
<dbReference type="FunCoup" id="Q9NA55">
    <property type="interactions" value="2"/>
</dbReference>
<dbReference type="STRING" id="6239.Y73F8A.17.1"/>
<dbReference type="PaxDb" id="6239-Y73F8A.17"/>
<dbReference type="EnsemblMetazoa" id="Y73F8A.17.1">
    <property type="protein sequence ID" value="Y73F8A.17.1"/>
    <property type="gene ID" value="WBGene00006559"/>
</dbReference>
<dbReference type="GeneID" id="190679"/>
<dbReference type="KEGG" id="cel:CELE_Y73F8A.17"/>
<dbReference type="UCSC" id="Y73F8A.17">
    <property type="organism name" value="c. elegans"/>
</dbReference>
<dbReference type="AGR" id="WB:WBGene00006559"/>
<dbReference type="CTD" id="190679"/>
<dbReference type="WormBase" id="Y73F8A.17">
    <property type="protein sequence ID" value="CE22986"/>
    <property type="gene ID" value="WBGene00006559"/>
    <property type="gene designation" value="tbx-40"/>
</dbReference>
<dbReference type="eggNOG" id="KOG3585">
    <property type="taxonomic scope" value="Eukaryota"/>
</dbReference>
<dbReference type="GeneTree" id="ENSGT00940000170863"/>
<dbReference type="HOGENOM" id="CLU_728115_0_0_1"/>
<dbReference type="InParanoid" id="Q9NA55"/>
<dbReference type="OMA" id="NCAQDAS"/>
<dbReference type="OrthoDB" id="5867717at2759"/>
<dbReference type="PhylomeDB" id="Q9NA55"/>
<dbReference type="PRO" id="PR:Q9NA55"/>
<dbReference type="Proteomes" id="UP000001940">
    <property type="component" value="Chromosome IV"/>
</dbReference>
<dbReference type="Bgee" id="WBGene00006559">
    <property type="expression patterns" value="Expressed in embryo and 1 other cell type or tissue"/>
</dbReference>
<dbReference type="GO" id="GO:0000785">
    <property type="term" value="C:chromatin"/>
    <property type="evidence" value="ECO:0000318"/>
    <property type="project" value="GO_Central"/>
</dbReference>
<dbReference type="GO" id="GO:0005634">
    <property type="term" value="C:nucleus"/>
    <property type="evidence" value="ECO:0000318"/>
    <property type="project" value="GO_Central"/>
</dbReference>
<dbReference type="GO" id="GO:0000981">
    <property type="term" value="F:DNA-binding transcription factor activity, RNA polymerase II-specific"/>
    <property type="evidence" value="ECO:0000318"/>
    <property type="project" value="GO_Central"/>
</dbReference>
<dbReference type="GO" id="GO:0000978">
    <property type="term" value="F:RNA polymerase II cis-regulatory region sequence-specific DNA binding"/>
    <property type="evidence" value="ECO:0000318"/>
    <property type="project" value="GO_Central"/>
</dbReference>
<dbReference type="GO" id="GO:0001708">
    <property type="term" value="P:cell fate specification"/>
    <property type="evidence" value="ECO:0000318"/>
    <property type="project" value="GO_Central"/>
</dbReference>
<dbReference type="GO" id="GO:0045893">
    <property type="term" value="P:positive regulation of DNA-templated transcription"/>
    <property type="evidence" value="ECO:0007669"/>
    <property type="project" value="InterPro"/>
</dbReference>
<dbReference type="GO" id="GO:0006357">
    <property type="term" value="P:regulation of transcription by RNA polymerase II"/>
    <property type="evidence" value="ECO:0000318"/>
    <property type="project" value="GO_Central"/>
</dbReference>
<dbReference type="CDD" id="cd00182">
    <property type="entry name" value="T-box"/>
    <property type="match status" value="1"/>
</dbReference>
<dbReference type="FunFam" id="2.60.40.820:FF:000018">
    <property type="entry name" value="Putative T-box protein 35"/>
    <property type="match status" value="1"/>
</dbReference>
<dbReference type="Gene3D" id="2.60.40.820">
    <property type="entry name" value="Transcription factor, T-box"/>
    <property type="match status" value="1"/>
</dbReference>
<dbReference type="InterPro" id="IPR008967">
    <property type="entry name" value="p53-like_TF_DNA-bd_sf"/>
</dbReference>
<dbReference type="InterPro" id="IPR046360">
    <property type="entry name" value="T-box_DNA-bd"/>
</dbReference>
<dbReference type="InterPro" id="IPR036960">
    <property type="entry name" value="T-box_sf"/>
</dbReference>
<dbReference type="InterPro" id="IPR001699">
    <property type="entry name" value="TF_T-box"/>
</dbReference>
<dbReference type="InterPro" id="IPR018186">
    <property type="entry name" value="TF_T-box_CS"/>
</dbReference>
<dbReference type="PANTHER" id="PTHR11267:SF196">
    <property type="entry name" value="T-BOX PROTEIN 30_42-RELATED"/>
    <property type="match status" value="1"/>
</dbReference>
<dbReference type="PANTHER" id="PTHR11267">
    <property type="entry name" value="T-BOX PROTEIN-RELATED"/>
    <property type="match status" value="1"/>
</dbReference>
<dbReference type="Pfam" id="PF00907">
    <property type="entry name" value="T-box"/>
    <property type="match status" value="1"/>
</dbReference>
<dbReference type="PRINTS" id="PR00937">
    <property type="entry name" value="TBOX"/>
</dbReference>
<dbReference type="SMART" id="SM00425">
    <property type="entry name" value="TBOX"/>
    <property type="match status" value="1"/>
</dbReference>
<dbReference type="SUPFAM" id="SSF49417">
    <property type="entry name" value="p53-like transcription factors"/>
    <property type="match status" value="1"/>
</dbReference>
<dbReference type="PROSITE" id="PS01264">
    <property type="entry name" value="TBOX_2"/>
    <property type="match status" value="1"/>
</dbReference>
<dbReference type="PROSITE" id="PS50252">
    <property type="entry name" value="TBOX_3"/>
    <property type="match status" value="1"/>
</dbReference>
<keyword id="KW-0238">DNA-binding</keyword>
<keyword id="KW-0539">Nucleus</keyword>
<keyword id="KW-1185">Reference proteome</keyword>
<keyword id="KW-0804">Transcription</keyword>
<keyword id="KW-0805">Transcription regulation</keyword>
<proteinExistence type="inferred from homology"/>
<name>TBX40_CAEEL</name>
<accession>Q9NA55</accession>
<feature type="chain" id="PRO_0000184485" description="Putative T-box protein 40">
    <location>
        <begin position="1"/>
        <end position="380"/>
    </location>
</feature>
<feature type="DNA-binding region" description="T-box" evidence="1">
    <location>
        <begin position="11"/>
        <end position="192"/>
    </location>
</feature>
<feature type="region of interest" description="Disordered" evidence="2">
    <location>
        <begin position="188"/>
        <end position="215"/>
    </location>
</feature>
<feature type="compositionally biased region" description="Basic and acidic residues" evidence="2">
    <location>
        <begin position="189"/>
        <end position="215"/>
    </location>
</feature>
<organism>
    <name type="scientific">Caenorhabditis elegans</name>
    <dbReference type="NCBI Taxonomy" id="6239"/>
    <lineage>
        <taxon>Eukaryota</taxon>
        <taxon>Metazoa</taxon>
        <taxon>Ecdysozoa</taxon>
        <taxon>Nematoda</taxon>
        <taxon>Chromadorea</taxon>
        <taxon>Rhabditida</taxon>
        <taxon>Rhabditina</taxon>
        <taxon>Rhabditomorpha</taxon>
        <taxon>Rhabditoidea</taxon>
        <taxon>Rhabditidae</taxon>
        <taxon>Peloderinae</taxon>
        <taxon>Caenorhabditis</taxon>
    </lineage>
</organism>
<reference key="1">
    <citation type="journal article" date="1998" name="Science">
        <title>Genome sequence of the nematode C. elegans: a platform for investigating biology.</title>
        <authorList>
            <consortium name="The C. elegans sequencing consortium"/>
        </authorList>
    </citation>
    <scope>NUCLEOTIDE SEQUENCE [LARGE SCALE GENOMIC DNA]</scope>
    <source>
        <strain>Bristol N2</strain>
    </source>
</reference>
<protein>
    <recommendedName>
        <fullName>Putative T-box protein 40</fullName>
    </recommendedName>
</protein>